<evidence type="ECO:0000255" key="1"/>
<evidence type="ECO:0000255" key="2">
    <source>
        <dbReference type="PROSITE-ProRule" id="PRU00521"/>
    </source>
</evidence>
<evidence type="ECO:0000269" key="3">
    <source>
    </source>
</evidence>
<evidence type="ECO:0000269" key="4">
    <source>
    </source>
</evidence>
<evidence type="ECO:0000269" key="5">
    <source>
    </source>
</evidence>
<evidence type="ECO:0000269" key="6">
    <source>
    </source>
</evidence>
<evidence type="ECO:0000269" key="7">
    <source>
    </source>
</evidence>
<evidence type="ECO:0000269" key="8">
    <source>
    </source>
</evidence>
<evidence type="ECO:0000269" key="9">
    <source>
    </source>
</evidence>
<evidence type="ECO:0000269" key="10">
    <source>
    </source>
</evidence>
<evidence type="ECO:0000269" key="11">
    <source>
    </source>
</evidence>
<evidence type="ECO:0000269" key="12">
    <source>
    </source>
</evidence>
<evidence type="ECO:0000269" key="13">
    <source>
    </source>
</evidence>
<evidence type="ECO:0000269" key="14">
    <source>
    </source>
</evidence>
<evidence type="ECO:0000269" key="15">
    <source>
    </source>
</evidence>
<evidence type="ECO:0000269" key="16">
    <source>
    </source>
</evidence>
<evidence type="ECO:0000269" key="17">
    <source>
    </source>
</evidence>
<evidence type="ECO:0000269" key="18">
    <source>
    </source>
</evidence>
<evidence type="ECO:0000269" key="19">
    <source>
    </source>
</evidence>
<evidence type="ECO:0000269" key="20">
    <source>
    </source>
</evidence>
<evidence type="ECO:0000269" key="21">
    <source>
    </source>
</evidence>
<evidence type="ECO:0000269" key="22">
    <source>
    </source>
</evidence>
<evidence type="ECO:0000269" key="23">
    <source>
    </source>
</evidence>
<evidence type="ECO:0000269" key="24">
    <source>
    </source>
</evidence>
<evidence type="ECO:0000269" key="25">
    <source>
    </source>
</evidence>
<evidence type="ECO:0000269" key="26">
    <source>
    </source>
</evidence>
<evidence type="ECO:0000269" key="27">
    <source>
    </source>
</evidence>
<evidence type="ECO:0000269" key="28">
    <source>
    </source>
</evidence>
<evidence type="ECO:0000269" key="29">
    <source>
    </source>
</evidence>
<evidence type="ECO:0000305" key="30"/>
<evidence type="ECO:0000312" key="31">
    <source>
        <dbReference type="HGNC" id="HGNC:1606"/>
    </source>
</evidence>
<evidence type="ECO:0007744" key="32">
    <source>
        <dbReference type="PDB" id="4MBS"/>
    </source>
</evidence>
<evidence type="ECO:0007744" key="33">
    <source>
        <dbReference type="PDB" id="5UIW"/>
    </source>
</evidence>
<evidence type="ECO:0007829" key="34">
    <source>
        <dbReference type="PDB" id="2L87"/>
    </source>
</evidence>
<evidence type="ECO:0007829" key="35">
    <source>
        <dbReference type="PDB" id="5UIW"/>
    </source>
</evidence>
<evidence type="ECO:0007829" key="36">
    <source>
        <dbReference type="PDB" id="7F1S"/>
    </source>
</evidence>
<evidence type="ECO:0007829" key="37">
    <source>
        <dbReference type="PDB" id="8AS3"/>
    </source>
</evidence>
<comment type="function">
    <text evidence="5 7 19 20 23 24">Receptor for a number of inflammatory CC-chemokines including CCL3/MIP-1-alpha, CCL4/MIP-1-beta and RANTES and subsequently transduces a signal by increasing the intracellular calcium ion level. May play a role in the control of granulocytic lineage proliferation or differentiation. Participates in T-lymphocyte migration to the infection site by acting as a chemotactic receptor (PubMed:30713770).</text>
</comment>
<comment type="function">
    <text evidence="5 16 21 22 29">(Microbial infection) Acts as a coreceptor (CD4 being the primary receptor) of human immunodeficiency virus-1/HIV-1.</text>
</comment>
<comment type="subunit">
    <text evidence="3 5 9 10 11 12 18 19 23 24">Interacts with PRAF2 (PubMed:15757671). Efficient ligand binding to CCL3/MIP-1alpha and CCL4/MIP-1beta requires sulfation, O-glycosylation and sialic acid modifications. Glycosylation on Ser-6 is required for efficient binding of CCL4 (PubMed:10383387, PubMed:11733580, PubMed:8663314, PubMed:8699119). Interacts with GRK2 (PubMed:10085131). Interacts with ARRB1 and ARRB2 (PubMed:11448957, PubMed:16144840). Interacts with CNIH4 (PubMed:24405750). Interacts with S100A4; this interaction stimulates T-lymphocyte chemotaxis (PubMed:30713770).</text>
</comment>
<comment type="subunit">
    <text evidence="16 29">(Microbial infection) Interacts with HIV-1 surface protein gp120.</text>
</comment>
<comment type="subunit">
    <text evidence="17">(Microbial infection) May interact with human cytomegalovirus/HHV-5 protein UL78.</text>
</comment>
<comment type="interaction">
    <interactant intactId="EBI-489374">
        <id>P51681</id>
    </interactant>
    <interactant intactId="EBI-21403047">
        <id>Q16570-2</id>
        <label>ACKR1</label>
    </interactant>
    <organismsDiffer>false</organismsDiffer>
    <experiments>3</experiments>
</comment>
<comment type="interaction">
    <interactant intactId="EBI-489374">
        <id>P51681</id>
    </interactant>
    <interactant intactId="EBI-16640146">
        <id>Q92583</id>
        <label>CCL17</label>
    </interactant>
    <organismsDiffer>false</organismsDiffer>
    <experiments>2</experiments>
</comment>
<comment type="interaction">
    <interactant intactId="EBI-489374">
        <id>P51681</id>
    </interactant>
    <interactant intactId="EBI-6625160">
        <id>PRO_0000005165</id>
        <label>CCL4</label>
        <dbReference type="UniProtKB" id="P13236"/>
    </interactant>
    <organismsDiffer>false</organismsDiffer>
    <experiments>2</experiments>
</comment>
<comment type="interaction">
    <interactant intactId="EBI-489374">
        <id>P51681</id>
    </interactant>
    <interactant intactId="EBI-2848366">
        <id>P13501</id>
        <label>CCL5</label>
    </interactant>
    <organismsDiffer>false</organismsDiffer>
    <experiments>6</experiments>
</comment>
<comment type="interaction">
    <interactant intactId="EBI-489374">
        <id>P51681</id>
    </interactant>
    <interactant intactId="EBI-489374">
        <id>P51681</id>
        <label>CCR5</label>
    </interactant>
    <organismsDiffer>false</organismsDiffer>
    <experiments>3</experiments>
</comment>
<comment type="interaction">
    <interactant intactId="EBI-489374">
        <id>P51681</id>
    </interactant>
    <interactant intactId="EBI-353826">
        <id>P01730</id>
        <label>CD4</label>
    </interactant>
    <organismsDiffer>false</organismsDiffer>
    <experiments>3</experiments>
</comment>
<comment type="interaction">
    <interactant intactId="EBI-489374">
        <id>P51681</id>
    </interactant>
    <interactant intactId="EBI-489411">
        <id>P61073</id>
        <label>CXCR4</label>
    </interactant>
    <organismsDiffer>false</organismsDiffer>
    <experiments>4</experiments>
</comment>
<comment type="interaction">
    <interactant intactId="EBI-489374">
        <id>P51681</id>
    </interactant>
    <interactant intactId="EBI-4319440">
        <id>P54849</id>
        <label>EMP1</label>
    </interactant>
    <organismsDiffer>false</organismsDiffer>
    <experiments>3</experiments>
</comment>
<comment type="interaction">
    <interactant intactId="EBI-489374">
        <id>P51681</id>
    </interactant>
    <interactant intactId="EBI-16027720">
        <id>O54081</id>
        <label>lukE</label>
    </interactant>
    <organismsDiffer>true</organismsDiffer>
    <experiments>2</experiments>
</comment>
<comment type="subcellular location">
    <subcellularLocation>
        <location evidence="5 7">Cell membrane</location>
        <topology evidence="7">Multi-pass membrane protein</topology>
    </subcellularLocation>
</comment>
<comment type="tissue specificity">
    <text evidence="20 23">Highly expressed in spleen, thymus, in the myeloid cell line THP-1, in the promyeloblastic cell line KG-1a and on CD4+ and CD8+ T-cells. Medium levels in peripheral blood leukocytes and in small intestine. Low levels in ovary and lung.</text>
</comment>
<comment type="induction">
    <text evidence="17">(Microbial infection) May be down-regulated by human cytomegalovirus/HHV-5 protein UL78.</text>
</comment>
<comment type="PTM">
    <text evidence="4 10 16">Sulfated on at least 2 of the N-terminal tyrosines. Sulfation contributes to the efficiency of HIV-1 entry and is required for efficient binding of the chemokines, CCL3 and CCL4.</text>
</comment>
<comment type="PTM">
    <text evidence="4 10">O-glycosylated, but not N-glycosylated. Ser-6 appears to be the major site even if Ser-7 may be also O-glycosylated. Also sialylated glycans present which contribute to chemokine binding. Thr-16 and Ser-17 may also be glycosylated and, if so, with small moieties such as a T-antigen.</text>
</comment>
<comment type="PTM">
    <text evidence="7">Palmitoylation in the C-terminal is important for cell surface expression, and to a lesser extent, for HIV entry.</text>
</comment>
<comment type="PTM">
    <text evidence="3">Phosphorylation on serine residues in the C-terminal is stimulated by binding CC chemokines especially by APO-RANTES.</text>
</comment>
<comment type="polymorphism">
    <text evidence="14 25 26">Variations in CCR5 are associated with resistance or susceptibility to immunodeficiency virus type 1 (resistance or susceptibility to HIV-1) [MIM:609423]. Variations in CCR5 gene also influence the rate of progression to AIDS after infection.</text>
</comment>
<comment type="polymorphism">
    <text evidence="13">Variations in CCR5 are associated with susceptibility to West Nile virus (WNV) infection [MIM:610379].</text>
</comment>
<comment type="disease" evidence="15">
    <disease id="DI-02780">
        <name>Type 1 diabetes mellitus 22</name>
        <acronym>T1D22</acronym>
        <description>A multifactorial disorder of glucose homeostasis that is characterized by susceptibility to ketoacidosis in the absence of insulin therapy. Clinical features are polydipsia, polyphagia and polyuria which result from hyperglycemia-induced osmotic diuresis and secondary thirst. These derangements result in long-term complications that affect the eyes, kidneys, nerves, and blood vessels.</description>
        <dbReference type="MIM" id="612522"/>
    </disease>
    <text>Disease susceptibility is associated with variants affecting the gene represented in this entry.</text>
</comment>
<comment type="similarity">
    <text evidence="2">Belongs to the G-protein coupled receptor 1 family.</text>
</comment>
<comment type="online information" name="Wikipedia">
    <link uri="https://en.wikipedia.org/wiki/CC_chemokine_receptors"/>
    <text>CC chemokine receptors entry</text>
</comment>
<comment type="online information" name="Wikipedia">
    <link uri="https://en.wikipedia.org/wiki/CCR5"/>
    <text>CCR5 receptor entry</text>
</comment>
<name>CCR5_HUMAN</name>
<gene>
    <name evidence="31" type="primary">CCR5</name>
    <name type="synonym">CMKBR5</name>
</gene>
<feature type="chain" id="PRO_0000069257" description="C-C chemokine receptor type 5">
    <location>
        <begin position="1"/>
        <end position="352"/>
    </location>
</feature>
<feature type="topological domain" description="Extracellular" evidence="1">
    <location>
        <begin position="1"/>
        <end position="30"/>
    </location>
</feature>
<feature type="transmembrane region" description="Helical; Name=1" evidence="1">
    <location>
        <begin position="31"/>
        <end position="58"/>
    </location>
</feature>
<feature type="topological domain" description="Cytoplasmic" evidence="1">
    <location>
        <begin position="59"/>
        <end position="68"/>
    </location>
</feature>
<feature type="transmembrane region" description="Helical; Name=2" evidence="1">
    <location>
        <begin position="69"/>
        <end position="89"/>
    </location>
</feature>
<feature type="topological domain" description="Extracellular" evidence="1">
    <location>
        <begin position="90"/>
        <end position="102"/>
    </location>
</feature>
<feature type="transmembrane region" description="Helical; Name=3" evidence="1">
    <location>
        <begin position="103"/>
        <end position="124"/>
    </location>
</feature>
<feature type="topological domain" description="Cytoplasmic" evidence="1">
    <location>
        <begin position="125"/>
        <end position="141"/>
    </location>
</feature>
<feature type="transmembrane region" description="Helical; Name=4" evidence="1">
    <location>
        <begin position="142"/>
        <end position="166"/>
    </location>
</feature>
<feature type="topological domain" description="Extracellular" evidence="1">
    <location>
        <begin position="167"/>
        <end position="198"/>
    </location>
</feature>
<feature type="transmembrane region" description="Helical; Name=5" evidence="1">
    <location>
        <begin position="199"/>
        <end position="218"/>
    </location>
</feature>
<feature type="topological domain" description="Cytoplasmic" evidence="1">
    <location>
        <begin position="219"/>
        <end position="235"/>
    </location>
</feature>
<feature type="transmembrane region" description="Helical; Name=6" evidence="1">
    <location>
        <begin position="236"/>
        <end position="260"/>
    </location>
</feature>
<feature type="topological domain" description="Extracellular" evidence="1">
    <location>
        <begin position="261"/>
        <end position="277"/>
    </location>
</feature>
<feature type="transmembrane region" description="Helical; Name=7" evidence="1">
    <location>
        <begin position="278"/>
        <end position="301"/>
    </location>
</feature>
<feature type="topological domain" description="Cytoplasmic" evidence="1">
    <location>
        <begin position="302"/>
        <end position="352"/>
    </location>
</feature>
<feature type="modified residue" description="Sulfotyrosine" evidence="4">
    <location>
        <position position="3"/>
    </location>
</feature>
<feature type="modified residue" description="Sulfotyrosine" evidence="16">
    <location>
        <position position="10"/>
    </location>
</feature>
<feature type="modified residue" description="Sulfotyrosine" evidence="16">
    <location>
        <position position="14"/>
    </location>
</feature>
<feature type="modified residue" description="Sulfotyrosine" evidence="1">
    <location>
        <position position="15"/>
    </location>
</feature>
<feature type="modified residue" description="Phosphoserine; by BARK1" evidence="3">
    <location>
        <position position="336"/>
    </location>
</feature>
<feature type="modified residue" description="Phosphoserine; by BARK1" evidence="3">
    <location>
        <position position="337"/>
    </location>
</feature>
<feature type="modified residue" description="Phosphoserine; by BARK1" evidence="3">
    <location>
        <position position="342"/>
    </location>
</feature>
<feature type="modified residue" description="Phosphoserine; by BARK1" evidence="3">
    <location>
        <position position="349"/>
    </location>
</feature>
<feature type="lipid moiety-binding region" description="S-palmitoyl cysteine" evidence="7">
    <location>
        <position position="321"/>
    </location>
</feature>
<feature type="lipid moiety-binding region" description="S-palmitoyl cysteine" evidence="7">
    <location>
        <position position="323"/>
    </location>
</feature>
<feature type="lipid moiety-binding region" description="S-palmitoyl cysteine" evidence="7">
    <location>
        <position position="324"/>
    </location>
</feature>
<feature type="glycosylation site" description="O-linked (GalNAc...) serine" evidence="10">
    <location>
        <position position="6"/>
    </location>
</feature>
<feature type="glycosylation site" description="O-linked (GalNAc...) serine" evidence="10">
    <location>
        <position position="7"/>
    </location>
</feature>
<feature type="disulfide bond" evidence="32 33">
    <location>
        <begin position="20"/>
        <end position="269"/>
    </location>
</feature>
<feature type="disulfide bond" evidence="2 32 33">
    <location>
        <begin position="101"/>
        <end position="178"/>
    </location>
</feature>
<feature type="sequence variant" id="VAR_003481" description="In INCCR5-71A; results in absent sulfation and greatly decreased binding CCL4 and CCL5 when associated with D-3, D-10 and D-15; restored most CCL4 binding when associated with D-3 and D-15." evidence="10">
    <original>Y</original>
    <variation>D</variation>
    <location>
        <position position="10"/>
    </location>
</feature>
<feature type="sequence variant" id="VAR_024066" evidence="28">
    <original>I</original>
    <variation>L</variation>
    <location>
        <position position="12"/>
    </location>
</feature>
<feature type="sequence variant" id="VAR_024067" description="In dbSNP:rs145061115." evidence="28">
    <original>C</original>
    <variation>S</variation>
    <location>
        <position position="20"/>
    </location>
</feature>
<feature type="sequence variant" id="VAR_011839" description="In dbSNP:rs1800939." evidence="28">
    <original>A</original>
    <variation>S</variation>
    <location>
        <position position="29"/>
    </location>
</feature>
<feature type="sequence variant" id="VAR_003482" description="In INCCR5-72A; dbSNP:rs56340326.">
    <original>R</original>
    <variation>H</variation>
    <location>
        <position position="31"/>
    </location>
</feature>
<feature type="sequence variant" id="VAR_003483" description="In TZCCR5-179.">
    <original>P</original>
    <variation>L</variation>
    <location>
        <position position="34"/>
    </location>
</feature>
<feature type="sequence variant" id="VAR_024068" description="In dbSNP:rs1475319259." evidence="28">
    <original>I</original>
    <variation>F</variation>
    <location>
        <position position="42"/>
    </location>
</feature>
<feature type="sequence variant" id="VAR_011840" description="In dbSNP:rs1799863." evidence="27 28">
    <original>L</original>
    <variation>Q</variation>
    <location>
        <position position="55"/>
    </location>
</feature>
<feature type="sequence variant" id="VAR_011841" description="Risk factor for HIV-1; reduced cell surface expression; confers reduced susceptibility to infection by microbes that depend on these molecules as their receptors; dbSNP:rs1800940." evidence="8 28">
    <original>R</original>
    <variation>S</variation>
    <location>
        <position position="60"/>
    </location>
</feature>
<feature type="sequence variant" id="VAR_003484" description="In UGCCR5-145B.">
    <original>K</original>
    <variation>R</variation>
    <location>
        <position position="62"/>
    </location>
</feature>
<feature type="sequence variant" id="VAR_003485" description="In ZWCCR5-7; dbSNP:rs758090461.">
    <original>Y</original>
    <variation>H</variation>
    <location>
        <position position="68"/>
    </location>
</feature>
<feature type="sequence variant" id="VAR_024069" description="In dbSNP:rs56198941." evidence="28">
    <original>A</original>
    <variation>V</variation>
    <location>
        <position position="73"/>
    </location>
</feature>
<feature type="sequence variant" id="VAR_003486" description="In MWCCR5-107; dbSNP:rs149975182.">
    <original>D</original>
    <variation>N</variation>
    <location>
        <position position="95"/>
    </location>
</feature>
<feature type="sequence variant" id="VAR_003487" description="In INCCR5-467.">
    <original>G</original>
    <variation>E</variation>
    <location>
        <position position="97"/>
    </location>
</feature>
<feature type="sequence variant" id="VAR_080410" description="Protects against HIV-1 infection; CD4+ T-cells from R-106 carriers are less susceptible to infection by HIV-1 R5; results in reduced CCR5 surface expression; dbSNP:rs183662584." evidence="14">
    <original>G</original>
    <variation>R</variation>
    <location>
        <position position="106"/>
    </location>
</feature>
<feature type="sequence variant" id="VAR_003488" description="In ZWCCR5-7.">
    <original>L</original>
    <variation>P</variation>
    <location>
        <position position="122"/>
    </location>
</feature>
<feature type="sequence variant" id="VAR_003489" description="In UGCCR5-145A.">
    <original>F</original>
    <variation>S</variation>
    <location>
        <position position="158"/>
    </location>
</feature>
<feature type="sequence variant" id="VAR_003490" description="In KECCR5-116.">
    <original>Y</original>
    <variation>C</variation>
    <location>
        <position position="176"/>
    </location>
</feature>
<feature type="sequence variant" id="VAR_003491" description="In INCCR5-45C.">
    <original>T</original>
    <variation>A</variation>
    <location>
        <position position="177"/>
    </location>
</feature>
<feature type="sequence variant" id="VAR_012481" description="Protects against HIV-1 infection; CD4+ T-cells from R-178 carriers are less susceptible to infection by HIV-1 R5; results in reduced CCR5 surface expression; dbSNP:rs199824195." evidence="6 14">
    <original>C</original>
    <variation>R</variation>
    <location>
        <position position="178"/>
    </location>
</feature>
<feature type="sequence variant" id="VAR_003492" description="In UGCCR5-145A.">
    <original>S</original>
    <variation>N</variation>
    <location>
        <position position="185"/>
    </location>
</feature>
<feature type="sequence variant" id="VAR_003493" description="In ZWCCR5-7.">
    <original>M</original>
    <variation>V</variation>
    <location>
        <position position="210"/>
    </location>
</feature>
<feature type="sequence variant" id="VAR_003494" description="In KECCR5-3B.">
    <original>Y</original>
    <variation>C</variation>
    <location>
        <position position="214"/>
    </location>
</feature>
<feature type="sequence variant" id="VAR_024070" description="In dbSNP:rs1017863136." evidence="27">
    <original>S</original>
    <variation>L</variation>
    <location>
        <position position="215"/>
    </location>
</feature>
<feature type="sequence variant" id="VAR_011842" description="In dbSNP:rs1800452." evidence="27 28">
    <original>R</original>
    <variation>Q</variation>
    <location>
        <position position="223"/>
    </location>
</feature>
<feature type="sequence variant" id="VAR_024071" evidence="28">
    <location>
        <position position="228"/>
    </location>
</feature>
<feature type="sequence variant" id="VAR_003495" description="In INCCR5-71A.">
    <original>T</original>
    <variation>S</variation>
    <location>
        <position position="239"/>
    </location>
</feature>
<feature type="sequence variant" id="VAR_003496" description="In UGCCR5-145A; dbSNP:rs143181119.">
    <original>L</original>
    <variation>P</variation>
    <location>
        <position position="246"/>
    </location>
</feature>
<feature type="sequence variant" id="VAR_003497" description="In INCCR5-72A; dbSNP:rs534088482.">
    <original>T</original>
    <variation>M</variation>
    <location>
        <position position="288"/>
    </location>
</feature>
<feature type="sequence variant" id="VAR_011843" description="In dbSNP:rs1800943." evidence="28">
    <original>G</original>
    <variation>V</variation>
    <location>
        <position position="301"/>
    </location>
</feature>
<feature type="sequence variant" id="VAR_003498" description="In TZCCR5-179.">
    <original>E</original>
    <variation>G</variation>
    <location>
        <position position="302"/>
    </location>
</feature>
<feature type="sequence variant" id="VAR_003499" description="In THCCR5-5.">
    <original>K</original>
    <variation>E</variation>
    <location>
        <position position="303"/>
    </location>
</feature>
<feature type="sequence variant" id="VAR_003500" description="In MWCCR5-1567.">
    <original>N</original>
    <variation>S</variation>
    <location>
        <position position="306"/>
    </location>
</feature>
<feature type="sequence variant" id="VAR_003501" description="In THCCR5-5.">
    <original>K</original>
    <variation>R</variation>
    <location>
        <position position="322"/>
    </location>
</feature>
<feature type="sequence variant" id="VAR_003502" description="In THCCR5-2.">
    <original>E</original>
    <variation>G</variation>
    <location>
        <position position="333"/>
    </location>
</feature>
<feature type="sequence variant" id="VAR_003503" description="In MWCCR5-1567, MWCCR5-1568, ZWCCR5-14 and ZWCCR5-112; dbSNP:rs1800944." evidence="27 28">
    <original>A</original>
    <variation>V</variation>
    <location>
        <position position="335"/>
    </location>
</feature>
<feature type="sequence variant" id="VAR_003504" description="In TZCCR5-181A and MWCCR5-107; dbSNP:rs1800945." evidence="27 28">
    <original>Y</original>
    <variation>F</variation>
    <location>
        <position position="339"/>
    </location>
</feature>
<feature type="sequence variant" id="VAR_003505" description="In UGCCR5-145C.">
    <original>E</original>
    <variation>G</variation>
    <location>
        <position position="345"/>
    </location>
</feature>
<feature type="mutagenesis site" description="No sulfation and strongly decreases binding with CCL4 and CCL5; when associated with D-10; D-14 and D-15. Restores most CCL4 binding; when associated with D-10 and D-15." evidence="4 10">
    <original>Y</original>
    <variation>D</variation>
    <location>
        <position position="3"/>
    </location>
</feature>
<feature type="mutagenesis site" description="No sulfation and strongly decreases binding with CCL4 and CCL5; when associated with F-10; F-14 and F-15." evidence="4 10">
    <original>Y</original>
    <variation>F</variation>
    <location>
        <position position="3"/>
    </location>
</feature>
<feature type="mutagenesis site" description="Loss of molecular mass of 2 kDa compared to wild type when treated with O-glycosidase. Dramatically reduces binding with CCL4. Loss of molecular mass of about 2 kDa as compared to wild type, dramatically reduces binding by CCL4; when associated with A-16-17-A." evidence="10">
    <original>SS</original>
    <variation>AA</variation>
    <location>
        <begin position="6"/>
        <end position="7"/>
    </location>
</feature>
<feature type="mutagenesis site" description="Strongly decreases CCL4 binding. No change in glycosylation status." evidence="10">
    <original>S</original>
    <variation>A</variation>
    <location>
        <position position="6"/>
    </location>
</feature>
<feature type="mutagenesis site" description="No change in glycosylation status and binds CCL4 as efficiently as wild type." evidence="10">
    <original>S</original>
    <variation>A</variation>
    <location>
        <position position="7"/>
    </location>
</feature>
<feature type="mutagenesis site" description="No sulfation and greatly decreases binding of CCL4 and CCL5; when associated with F-3; F-14 and F-15. Small loss of sulfation; when associated with F-14 and F-15." evidence="4 10">
    <original>Y</original>
    <variation>F</variation>
    <location>
        <position position="10"/>
    </location>
</feature>
<feature type="mutagenesis site" description="No sulfation and greatly decreased binding of CCL4 and CCL5; when associated with D-3; D-10 and D-14. No restoration of CCL4 binding; when associated with D-10 and D-15." evidence="4 10">
    <original>Y</original>
    <variation>D</variation>
    <location>
        <position position="14"/>
    </location>
</feature>
<feature type="mutagenesis site" description="No sulfation and greatly decreases binding of CCL4 and CCL5; when associated with F-3; F-10; and F-15. Small loss of sulfation; when associated with F-10 and F-15." evidence="4 10">
    <original>Y</original>
    <variation>F</variation>
    <location>
        <position position="14"/>
    </location>
</feature>
<feature type="mutagenesis site" description="No sulfation and greatly decreased binding of CCL4 and CCL5; when associated with D-3; D-10 and D-14. Restored most CCL4 binding; when associated with D-3 and D-10." evidence="4 10">
    <original>Y</original>
    <variation>D</variation>
    <location>
        <position position="15"/>
    </location>
</feature>
<feature type="mutagenesis site" description="No sulfation and greatly decreases binding of CCL4 and CCL5; when associated with F-3; F-10 and F-14. Small loss of sulfation; when associated with F-10 and F-14." evidence="4 10">
    <original>Y</original>
    <variation>F</variation>
    <location>
        <position position="15"/>
    </location>
</feature>
<feature type="mutagenesis site" description="Similar decrease in molecular mass when treated with O-glycosidase as for wild type. Loss of molecular mass of about 2 kDa as compared to wild type, dramatically reduces binding by CCL4; when associated with A-6-7-A." evidence="10">
    <original>TS</original>
    <variation>AA</variation>
    <location>
        <begin position="16"/>
        <end position="17"/>
    </location>
</feature>
<feature type="mutagenesis site" description="Decreases to 40% surface expression. No effect on conformational integrity. Disrupts binding of CCL4. Decreases cell HIV infection." evidence="5">
    <original>C</original>
    <variation>A</variation>
    <location>
        <position position="20"/>
    </location>
</feature>
<feature type="mutagenesis site" description="Decreases to 40% surface expression. Disrupts conformational integrity. Disrupts binding of CCL4. Decreases HIV cell infection." evidence="5">
    <original>C</original>
    <variation>A</variation>
    <location>
        <position position="101"/>
    </location>
</feature>
<feature type="mutagenesis site" description="Decreases to 40% surface expression. Disrupts conformational integrity. Disrupts binding of CCL4. Decreases HIV cell infection." evidence="5">
    <original>C</original>
    <variation>A</variation>
    <location>
        <position position="178"/>
    </location>
</feature>
<feature type="mutagenesis site" description="Decreases to 40% surface expression. No effect on conformational integrity. Disrupts binding of CCL4. Decreases cell HIV infection." evidence="5">
    <original>C</original>
    <variation>A</variation>
    <location>
        <position position="269"/>
    </location>
</feature>
<feature type="mutagenesis site" description="Small reduction in palmitoylation. Cell surface expression reduced by 50%. Greatly reduced palmitoylation. Cell surface expression greatly reduced; when associated with A-323 or A-324. No palmitoylation. Cell surface expression greatly reduced. HIV entry reduced by 50%; when associated with A-323 and A-324." evidence="7">
    <original>C</original>
    <variation>A</variation>
    <location>
        <position position="321"/>
    </location>
</feature>
<feature type="mutagenesis site" description="Small reduction in palmitoylation. Cell surface expression reduced by 50%. Greatly reduced palmitoylation. Cell surface expression greatly reduced; when associated with A-321 or A-324. No palmitoylation. Cell surface expression greatly reduced. HIV entry reduced by 50%; when associated with A-321 and A-324." evidence="7">
    <original>C</original>
    <variation>A</variation>
    <location>
        <position position="323"/>
    </location>
</feature>
<feature type="mutagenesis site" description="Small reduction in palmitoylation. Cell surface expression reduced by 50%. Greatly reduced palmitoylation. Cell surface expression greatly reduced; when associated with A-321 or A-323. No palmitoylation. Cell surface expression greatly reduced. HIV entry reduced by 50%; when associated with A-321 and A-323." evidence="7">
    <original>C</original>
    <variation>A</variation>
    <location>
        <position position="324"/>
    </location>
</feature>
<feature type="mutagenesis site" description="APO-RANTES-stimulated phosphorylation reduced by 15%; APO-RANTES-stimulated phosphorylation reduced by 30-50%; when associated with A-337 or A-342 or A-349; APO-RANTES-stimulated phosphorylation reduced by 80%; when associated with A-337 and A-342 or A-349; No APO-RANTES-stimulated phosphorylation; when associated with A-337; A-342 and A349; abolishes interaction with ARRB2; when associated with S-337; S-342 and S-349." evidence="3 9">
    <original>S</original>
    <variation>A</variation>
    <location>
        <position position="336"/>
    </location>
</feature>
<feature type="mutagenesis site" description="APO-RANTES-stimulated phosphorylation reduced by 18%; APO-RANTES-stimulated phosphorylation reduced by 30-50% on APO-RANTES stimulation; when associated with A-336 or A-342 or A-349; APO-RANTES-stimulated phosphorylation reduced by 80%; when associated with A-336 and A-342 or A-349; No APO-RANTES-stimulated phosphorylation; when associated with A-336; A-342 and A349; abolishes interaction with ARRB2; when associated with S-336; S-342 and S-349." evidence="3 9">
    <original>S</original>
    <variation>A</variation>
    <location>
        <position position="337"/>
    </location>
</feature>
<feature type="mutagenesis site" description="APO-RANTES-stimulated phosphorylation reduced by 42%. Phosphorylation reduced by 50% on APO-RANTES stimulation; when associated with A-336 or A-337 or A-349; APO-RANTES-stimulated phosphorylation reduced by 80% when associated with A-336 and A-337 or A-349; No APO-RANTES-stimulated phosphorylation; when associated with A-336; A-337 and A349; abolishes interaction with ARRB2; when associated with S-336; S-337 and S-349." evidence="3 9">
    <original>S</original>
    <variation>A</variation>
    <location>
        <position position="342"/>
    </location>
</feature>
<feature type="mutagenesis site" description="APO-RANTES-stimulated phosphorylation reduced by 43%; APO-RANTES-stimulated phosphorylation reduced by 30-50%; when associated with A-336 or A-337 or A-342; APO-RANTES-stimulated phosphorylation reduced by 80%; when associated with A-336 and A-337 or A-342; No APO-RANTES-stimulated phosphorylation stimulation; when associated with A-336; A-337 and A347; abolishes interaction with ARRB2; when associated with S-336; S-337 and S-342." evidence="3 9">
    <original>S</original>
    <variation>A</variation>
    <location>
        <position position="349"/>
    </location>
</feature>
<feature type="helix" evidence="34">
    <location>
        <begin position="10"/>
        <end position="13"/>
    </location>
</feature>
<feature type="helix" evidence="34">
    <location>
        <begin position="14"/>
        <end position="17"/>
    </location>
</feature>
<feature type="turn" evidence="34">
    <location>
        <begin position="20"/>
        <end position="22"/>
    </location>
</feature>
<feature type="helix" evidence="35">
    <location>
        <begin position="23"/>
        <end position="57"/>
    </location>
</feature>
<feature type="turn" evidence="36">
    <location>
        <begin position="58"/>
        <end position="61"/>
    </location>
</feature>
<feature type="helix" evidence="35">
    <location>
        <begin position="64"/>
        <end position="91"/>
    </location>
</feature>
<feature type="helix" evidence="35">
    <location>
        <begin position="97"/>
        <end position="131"/>
    </location>
</feature>
<feature type="turn" evidence="35">
    <location>
        <begin position="133"/>
        <end position="135"/>
    </location>
</feature>
<feature type="helix" evidence="35">
    <location>
        <begin position="136"/>
        <end position="139"/>
    </location>
</feature>
<feature type="helix" evidence="35">
    <location>
        <begin position="142"/>
        <end position="165"/>
    </location>
</feature>
<feature type="strand" evidence="35">
    <location>
        <begin position="167"/>
        <end position="172"/>
    </location>
</feature>
<feature type="strand" evidence="35">
    <location>
        <begin position="175"/>
        <end position="180"/>
    </location>
</feature>
<feature type="helix" evidence="35">
    <location>
        <begin position="184"/>
        <end position="186"/>
    </location>
</feature>
<feature type="helix" evidence="35">
    <location>
        <begin position="187"/>
        <end position="202"/>
    </location>
</feature>
<feature type="helix" evidence="35">
    <location>
        <begin position="204"/>
        <end position="221"/>
    </location>
</feature>
<feature type="helix" evidence="35">
    <location>
        <begin position="227"/>
        <end position="259"/>
    </location>
</feature>
<feature type="turn" evidence="35">
    <location>
        <begin position="260"/>
        <end position="265"/>
    </location>
</feature>
<feature type="helix" evidence="35">
    <location>
        <begin position="269"/>
        <end position="288"/>
    </location>
</feature>
<feature type="helix" evidence="35">
    <location>
        <begin position="289"/>
        <end position="291"/>
    </location>
</feature>
<feature type="helix" evidence="35">
    <location>
        <begin position="292"/>
        <end position="299"/>
    </location>
</feature>
<feature type="helix" evidence="35">
    <location>
        <begin position="302"/>
        <end position="313"/>
    </location>
</feature>
<feature type="strand" evidence="37">
    <location>
        <begin position="341"/>
        <end position="344"/>
    </location>
</feature>
<proteinExistence type="evidence at protein level"/>
<reference key="1">
    <citation type="journal article" date="1996" name="Biochemistry">
        <title>Molecular cloning and functional expression of a new human CC-chemokine receptor gene.</title>
        <authorList>
            <person name="Samson M."/>
            <person name="Labbe O."/>
            <person name="Mollereau C."/>
            <person name="Vassart G."/>
            <person name="Parmentier M."/>
        </authorList>
    </citation>
    <scope>NUCLEOTIDE SEQUENCE [GENOMIC DNA]</scope>
    <scope>FUNCTION</scope>
    <scope>TISSUE SPECIFICITY</scope>
</reference>
<reference key="2">
    <citation type="journal article" date="1996" name="J. Biol. Chem.">
        <title>Molecular cloning and functional characterization of a novel human CC chemokine receptor (CCR5) for RANTES, MIP-1beta, and MIP-1alpha.</title>
        <authorList>
            <person name="Raport C.J."/>
            <person name="Gosling J."/>
            <person name="Schweichart V.L."/>
            <person name="Gray P.W."/>
            <person name="Charo I.F."/>
        </authorList>
    </citation>
    <scope>NUCLEOTIDE SEQUENCE [MRNA]</scope>
    <scope>FUNCTION</scope>
    <scope>INTERACTION WITH CCL4 AND CCL5</scope>
    <scope>TISSUE SPECIFICITY</scope>
    <source>
        <tissue>Macrophage</tissue>
    </source>
</reference>
<reference key="3">
    <citation type="journal article" date="1996" name="J. Leukoc. Biol.">
        <title>Cloning and functional expression of CC CKR5, a human monocyte CC chemokine receptor selective for MIP-1(alpha), MIP-1(beta), and RANTES.</title>
        <authorList>
            <person name="Combadiere C."/>
            <person name="Ahuja S.K."/>
            <person name="Tiffany H.L."/>
            <person name="Murphy P.M."/>
        </authorList>
    </citation>
    <scope>NUCLEOTIDE SEQUENCE [MRNA]</scope>
    <scope>FUNCTION</scope>
    <scope>INTERACTION WITH CCL3; CCL4 AND CCL5</scope>
</reference>
<reference key="4">
    <citation type="journal article" date="1997" name="J. Virol.">
        <title>Polymorphisms in the CCR5 genes of African green monkeys and mice implicate specific amino acids in infections by simian and human immunodeficiency viruses.</title>
        <authorList>
            <person name="Kuhmann S.E."/>
            <person name="Platt E.J."/>
            <person name="Kozak S.L."/>
            <person name="Kabat D."/>
        </authorList>
    </citation>
    <scope>NUCLEOTIDE SEQUENCE [GENOMIC DNA]</scope>
</reference>
<reference key="5">
    <citation type="journal article" date="1997" name="AIDS Res. Hum. Retroviruses">
        <title>HIV type 1 subtypes, coreceptor usage, and CCR5 polymorphism.</title>
        <authorList>
            <person name="Zhang L."/>
            <person name="Carruthers C.D."/>
            <person name="He T."/>
            <person name="Huang Y."/>
            <person name="Cao Y."/>
            <person name="Wang G."/>
            <person name="Hahn B."/>
            <person name="Ho D.D."/>
        </authorList>
    </citation>
    <scope>NUCLEOTIDE SEQUENCE [MRNA]</scope>
    <scope>POLYMORPHISM</scope>
</reference>
<reference key="6">
    <citation type="journal article" date="1997" name="J. Biol. Chem.">
        <title>The human CC chemokine receptor 5 (CCR5) gene. Multiple transcripts with 5'-end heterogeneity, dual promoter usage, and evidence for polymorphisms within the regulatory regions and noncoding exons.</title>
        <authorList>
            <person name="Mummidi S."/>
            <person name="Ahuja S.S."/>
            <person name="McDaniel B.L."/>
            <person name="Ahuja S.K."/>
        </authorList>
    </citation>
    <scope>NUCLEOTIDE SEQUENCE [GENOMIC DNA]</scope>
</reference>
<reference key="7">
    <citation type="journal article" date="1999" name="Microbes Infect.">
        <title>Novel variant of the CCR5 gene in a Vietnamese population.</title>
        <authorList>
            <person name="Magierowska M."/>
            <person name="Lepage V."/>
            <person name="Lien T.X."/>
            <person name="Lan N.T."/>
            <person name="Guillotel M."/>
            <person name="Issafras H."/>
            <person name="Reynes J.M."/>
            <person name="Fleury H.J."/>
            <person name="Chi N.H."/>
            <person name="Follezou J.Y."/>
            <person name="Debre P."/>
            <person name="Theodorou I."/>
            <person name="Barre-Sinoussi F."/>
        </authorList>
    </citation>
    <scope>NUCLEOTIDE SEQUENCE [GENOMIC DNA]</scope>
    <scope>VARIANT ARG-178</scope>
</reference>
<reference key="8">
    <citation type="submission" date="2003-01" db="EMBL/GenBank/DDBJ databases">
        <title>cDNA clones of human proteins involved in signal transduction sequenced by the Guthrie cDNA resource center (www.cdna.org).</title>
        <authorList>
            <person name="Kopatz S.A."/>
            <person name="Aronstam R.S."/>
            <person name="Sharma S.V."/>
        </authorList>
    </citation>
    <scope>NUCLEOTIDE SEQUENCE [LARGE SCALE MRNA]</scope>
</reference>
<reference key="9">
    <citation type="journal article" date="2006" name="Nature">
        <title>The DNA sequence, annotation and analysis of human chromosome 3.</title>
        <authorList>
            <person name="Muzny D.M."/>
            <person name="Scherer S.E."/>
            <person name="Kaul R."/>
            <person name="Wang J."/>
            <person name="Yu J."/>
            <person name="Sudbrak R."/>
            <person name="Buhay C.J."/>
            <person name="Chen R."/>
            <person name="Cree A."/>
            <person name="Ding Y."/>
            <person name="Dugan-Rocha S."/>
            <person name="Gill R."/>
            <person name="Gunaratne P."/>
            <person name="Harris R.A."/>
            <person name="Hawes A.C."/>
            <person name="Hernandez J."/>
            <person name="Hodgson A.V."/>
            <person name="Hume J."/>
            <person name="Jackson A."/>
            <person name="Khan Z.M."/>
            <person name="Kovar-Smith C."/>
            <person name="Lewis L.R."/>
            <person name="Lozado R.J."/>
            <person name="Metzker M.L."/>
            <person name="Milosavljevic A."/>
            <person name="Miner G.R."/>
            <person name="Morgan M.B."/>
            <person name="Nazareth L.V."/>
            <person name="Scott G."/>
            <person name="Sodergren E."/>
            <person name="Song X.-Z."/>
            <person name="Steffen D."/>
            <person name="Wei S."/>
            <person name="Wheeler D.A."/>
            <person name="Wright M.W."/>
            <person name="Worley K.C."/>
            <person name="Yuan Y."/>
            <person name="Zhang Z."/>
            <person name="Adams C.Q."/>
            <person name="Ansari-Lari M.A."/>
            <person name="Ayele M."/>
            <person name="Brown M.J."/>
            <person name="Chen G."/>
            <person name="Chen Z."/>
            <person name="Clendenning J."/>
            <person name="Clerc-Blankenburg K.P."/>
            <person name="Chen R."/>
            <person name="Chen Z."/>
            <person name="Davis C."/>
            <person name="Delgado O."/>
            <person name="Dinh H.H."/>
            <person name="Dong W."/>
            <person name="Draper H."/>
            <person name="Ernst S."/>
            <person name="Fu G."/>
            <person name="Gonzalez-Garay M.L."/>
            <person name="Garcia D.K."/>
            <person name="Gillett W."/>
            <person name="Gu J."/>
            <person name="Hao B."/>
            <person name="Haugen E."/>
            <person name="Havlak P."/>
            <person name="He X."/>
            <person name="Hennig S."/>
            <person name="Hu S."/>
            <person name="Huang W."/>
            <person name="Jackson L.R."/>
            <person name="Jacob L.S."/>
            <person name="Kelly S.H."/>
            <person name="Kube M."/>
            <person name="Levy R."/>
            <person name="Li Z."/>
            <person name="Liu B."/>
            <person name="Liu J."/>
            <person name="Liu W."/>
            <person name="Lu J."/>
            <person name="Maheshwari M."/>
            <person name="Nguyen B.-V."/>
            <person name="Okwuonu G.O."/>
            <person name="Palmeiri A."/>
            <person name="Pasternak S."/>
            <person name="Perez L.M."/>
            <person name="Phelps K.A."/>
            <person name="Plopper F.J."/>
            <person name="Qiang B."/>
            <person name="Raymond C."/>
            <person name="Rodriguez R."/>
            <person name="Saenphimmachak C."/>
            <person name="Santibanez J."/>
            <person name="Shen H."/>
            <person name="Shen Y."/>
            <person name="Subramanian S."/>
            <person name="Tabor P.E."/>
            <person name="Verduzco D."/>
            <person name="Waldron L."/>
            <person name="Wang J."/>
            <person name="Wang J."/>
            <person name="Wang Q."/>
            <person name="Williams G.A."/>
            <person name="Wong G.K.-S."/>
            <person name="Yao Z."/>
            <person name="Zhang J."/>
            <person name="Zhang X."/>
            <person name="Zhao G."/>
            <person name="Zhou J."/>
            <person name="Zhou Y."/>
            <person name="Nelson D."/>
            <person name="Lehrach H."/>
            <person name="Reinhardt R."/>
            <person name="Naylor S.L."/>
            <person name="Yang H."/>
            <person name="Olson M."/>
            <person name="Weinstock G."/>
            <person name="Gibbs R.A."/>
        </authorList>
    </citation>
    <scope>NUCLEOTIDE SEQUENCE [LARGE SCALE GENOMIC DNA]</scope>
</reference>
<reference key="10">
    <citation type="journal article" date="2004" name="Genome Res.">
        <title>The status, quality, and expansion of the NIH full-length cDNA project: the Mammalian Gene Collection (MGC).</title>
        <authorList>
            <consortium name="The MGC Project Team"/>
        </authorList>
    </citation>
    <scope>NUCLEOTIDE SEQUENCE [LARGE SCALE MRNA]</scope>
</reference>
<reference key="11">
    <citation type="journal article" date="1996" name="Cell">
        <title>Homozygous defect in HIV-1 coreceptor accounts for resistance of some multiply-exposed individuals to HIV-1 infection.</title>
        <authorList>
            <person name="Liu R."/>
            <person name="Paxton W.A."/>
            <person name="Choe S."/>
            <person name="Ceradini D."/>
            <person name="Martin S.R."/>
            <person name="Horuk R."/>
            <person name="MacDonald M.E."/>
            <person name="Stuhlmann H."/>
            <person name="Koup R.A."/>
            <person name="Landau N.R."/>
        </authorList>
    </citation>
    <scope>INVOLVEMENT IN RESISTANCE OR SUSCEPTIBILITY TO HIV-1</scope>
</reference>
<reference key="12">
    <citation type="journal article" date="1996" name="Nature">
        <title>Identification of a major co-receptor for primary isolates of HIV-1.</title>
        <authorList>
            <person name="Deng H."/>
            <person name="Liu R."/>
            <person name="Ellmeier W."/>
            <person name="Choe S."/>
            <person name="Unutmaz D."/>
            <person name="Burkhart M."/>
            <person name="di Marzio P."/>
            <person name="Marmon S."/>
            <person name="Sutton R.E."/>
            <person name="Hill C.M."/>
            <person name="Davis C.B."/>
            <person name="Peiper S.C."/>
            <person name="Schall T.J."/>
            <person name="Littman D.R."/>
            <person name="Landau N.R."/>
        </authorList>
    </citation>
    <scope>FUNCTION AS A HIV-1 CORECEPTOR</scope>
</reference>
<reference key="13">
    <citation type="journal article" date="1996" name="Nature">
        <title>HIV-1 entry into CD4+ cells is mediated by the chemokine receptor CC-CKR-5.</title>
        <authorList>
            <person name="Dragic T."/>
            <person name="Litwin V."/>
            <person name="Allaway G.P."/>
            <person name="Martin S.R."/>
            <person name="Huang Y."/>
            <person name="Nagashima K.A."/>
            <person name="Cayanan C."/>
            <person name="Maddon P.J."/>
            <person name="Koup R.A."/>
            <person name="Moore J.P."/>
            <person name="Paxton W.A."/>
        </authorList>
    </citation>
    <scope>FUNCTION AS A HIV-1 CORECEPTOR</scope>
</reference>
<reference key="14">
    <citation type="journal article" date="1996" name="Nature">
        <title>Resistance to HIV-1 infection in caucasian individuals bearing mutant alleles of the CCR-5 chemokine receptor gene.</title>
        <authorList>
            <person name="Samson M."/>
            <person name="Libert F."/>
            <person name="Doranz B.J."/>
            <person name="Rucker J."/>
            <person name="Liesnard C."/>
            <person name="Farber C.M."/>
            <person name="Saragosti S."/>
            <person name="Lapoumeroulie C."/>
            <person name="Cognaux J."/>
            <person name="Forceille C."/>
            <person name="Muyldermans G."/>
            <person name="Verhofstede C."/>
            <person name="Burtonboy G."/>
            <person name="Georges M."/>
            <person name="Imai T."/>
            <person name="Rana S."/>
            <person name="Yi Y."/>
            <person name="Smyth R.J."/>
            <person name="Collman R.G."/>
            <person name="Doms R.W."/>
            <person name="Vassart G."/>
            <person name="Parmentier M."/>
        </authorList>
    </citation>
    <scope>INVOLVEMENT IN RESISTANCE OR SUSCEPTIBILITY TO HIV-1</scope>
</reference>
<reference key="15">
    <citation type="journal article" date="1998" name="Science">
        <title>A conserved HIV gp120 glycoprotein structure involved in chemokine receptor binding.</title>
        <authorList>
            <person name="Rizzuto C.D."/>
            <person name="Wyatt R."/>
            <person name="Hernandez-Ramos N."/>
            <person name="Sun Y."/>
            <person name="Kwong P.D."/>
            <person name="Hendrickson W.A."/>
            <person name="Sodroski J."/>
        </authorList>
    </citation>
    <scope>INTERACTION WITH HIV-1 SURFACE PROTEIN GP120</scope>
    <scope>FUNCTION (MICROBIAL INFECTION)</scope>
</reference>
<reference key="16">
    <citation type="journal article" date="1999" name="Cell">
        <title>Tyrosine sulfation of the amino terminus of CCR5 facilitates HIV-1 entry.</title>
        <authorList>
            <person name="Farzan M."/>
            <person name="Mirzabekov T."/>
            <person name="Kolchinsky P."/>
            <person name="Wyatt R."/>
            <person name="Cayabyab M."/>
            <person name="Gerard N.P."/>
            <person name="Gerard C."/>
            <person name="Sodroski J."/>
            <person name="Choe H."/>
        </authorList>
    </citation>
    <scope>SULFATION AT TYR-3</scope>
    <scope>GLYCOSYLATION</scope>
    <scope>MUTAGENESIS OF TYR-3; TYR-10; TYR-14 AND TYR-15</scope>
</reference>
<reference key="17">
    <citation type="journal article" date="1999" name="J. Biol. Chem.">
        <title>Differential effects of CC chemokines on CC chemokine receptor 5 (CCR5) phosphorylation and identification of phosphorylation sites on the CCR5 carboxyl terminus.</title>
        <authorList>
            <person name="Oppermann M."/>
            <person name="Mack M."/>
            <person name="Proudfoot A.E."/>
            <person name="Olbrich H."/>
        </authorList>
    </citation>
    <scope>PHOSPHORYLATION AT SER-336; SER-337; SER-342 AND SER-349</scope>
    <scope>MUTAGENESIS OF SER-336; SER-337; SER-342 AND SER-349</scope>
    <scope>INTERACTION WITH GRK2</scope>
</reference>
<reference key="18">
    <citation type="journal article" date="1999" name="J. Biol. Chem.">
        <title>Extracellular cysteines of CCR5 are required for chemokine binding, but dispensable for HIV-1 coreceptor activity.</title>
        <authorList>
            <person name="Blanpain C."/>
            <person name="Lee B."/>
            <person name="Vakili J."/>
            <person name="Doranz B.J."/>
            <person name="Govaerts C."/>
            <person name="Migeotte I."/>
            <person name="Sharron M."/>
            <person name="Dupriez V."/>
            <person name="Vassart G."/>
            <person name="Doms R.W."/>
            <person name="Parmentier M."/>
        </authorList>
    </citation>
    <scope>FUNCTION</scope>
    <scope>FUNCTION (MICROBIAL INFECTION)</scope>
    <scope>MUTAGENESIS OF CYS-20; CYS-101; CYS-178 AND CYS-269</scope>
    <scope>SUBCELLULAR LOCATION</scope>
    <scope>INTERACTION WITH CCL4</scope>
</reference>
<reference key="19">
    <citation type="journal article" date="2001" name="J. Biol. Chem.">
        <title>Palmitoylation of CCR5 is critical for receptor trafficking and efficient activation of intracellular signaling pathways.</title>
        <authorList>
            <person name="Blanpain C."/>
            <person name="Wittamer V."/>
            <person name="Vanderwinden J.-M."/>
            <person name="Boom A."/>
            <person name="Renneboog B."/>
            <person name="Lee B."/>
            <person name="Le Poul E."/>
            <person name="El Asmar L."/>
            <person name="Govaerts C."/>
            <person name="Vassart G."/>
            <person name="Doms R.W."/>
            <person name="Parmentier M."/>
        </authorList>
    </citation>
    <scope>PALMITOYLATION AT CYS-321; CYS-323 AND CYS-324</scope>
    <scope>SUBCELLULAR LOCATION</scope>
    <scope>FUNCTION</scope>
    <scope>MUTAGENESIS OF CYS-321; CYS-323 AND CYS-324</scope>
</reference>
<reference key="20">
    <citation type="journal article" date="2001" name="J. Biol. Chem.">
        <title>Characterization of sequence determinants within the carboxyl-terminal domain of chemokine receptor CCR5 that regulate signaling and receptor internalization.</title>
        <authorList>
            <person name="Kraft K."/>
            <person name="Olbrich H."/>
            <person name="Majoul I."/>
            <person name="Mack M."/>
            <person name="Proudfoot A."/>
            <person name="Oppermann M."/>
        </authorList>
    </citation>
    <scope>INTERACTION WITH ARRB2</scope>
    <scope>MUTAGENESIS OF SER-336; SER-337; SER-342 AND SER-349</scope>
</reference>
<reference key="21">
    <citation type="journal article" date="2001" name="J. Exp. Med.">
        <title>Sialylated O-glycans and sulfated tyrosines in the NH2-terminal domain of CC chemokine receptor 5 contribute to high affinity binding of chemokines.</title>
        <authorList>
            <person name="Bannert N."/>
            <person name="Craig S."/>
            <person name="Farzan M."/>
            <person name="Sogah D."/>
            <person name="Santo N.V."/>
            <person name="Choe H."/>
            <person name="Sodroski J."/>
        </authorList>
    </citation>
    <scope>SULFATION</scope>
    <scope>GLYCOSYLATION AT SER-6 AND SER-7</scope>
    <scope>INTERACTION WITH CCL3; CCL4 AND CCL5</scope>
    <scope>MUTAGENESIS OF TYR-3; 6-SER-SER-7; SER-6; SER-7; TYR-10; TYR-14; TYR-15 AND 16-THR-SER-17</scope>
    <scope>CHARACTERIZATION OF VARIANT ASP-10</scope>
</reference>
<reference key="22">
    <citation type="journal article" date="2005" name="FEBS Lett.">
        <title>JM4 is a four-transmembrane protein binding to the CCR5 receptor.</title>
        <authorList>
            <person name="Schweneker M."/>
            <person name="Bachmann A.S."/>
            <person name="Moelling K."/>
        </authorList>
    </citation>
    <scope>INTERACTION WITH PRAF2</scope>
</reference>
<reference key="23">
    <citation type="journal article" date="2005" name="J. Biol. Chem.">
        <title>G protein-coupled receptor kinases promote phosphorylation and beta-arrestin-mediated internalization of CCR5 homo- and hetero-oligomers.</title>
        <authorList>
            <person name="Huettenrauch F."/>
            <person name="Pollok-Kopp B."/>
            <person name="Oppermann M."/>
        </authorList>
    </citation>
    <scope>INTERACTION WITH ARRB1 AND ARRB2</scope>
</reference>
<reference key="24">
    <citation type="journal article" date="2006" name="J. Exp. Med.">
        <title>CCR5 deficiency increases risk of symptomatic West Nile virus infection.</title>
        <authorList>
            <person name="Glass W.G."/>
            <person name="McDermott D.H."/>
            <person name="Lim J.K."/>
            <person name="Lekhong S."/>
            <person name="Yu S.F."/>
            <person name="Frank W.A."/>
            <person name="Pape J."/>
            <person name="Cheshier R.C."/>
            <person name="Murphy P.M."/>
        </authorList>
    </citation>
    <scope>INVOLVEMENT IN WEST NILE VIRUS INFECTION SUSCEPTIBILITY</scope>
</reference>
<reference key="25">
    <citation type="journal article" date="2012" name="Blood">
        <title>Human cytomegalovirus-encoded UL33 and UL78 heteromerize with host CCR5 and CXCR4 impairing their HIV coreceptor activity.</title>
        <authorList>
            <person name="Tadagaki K."/>
            <person name="Tudor D."/>
            <person name="Gbahou F."/>
            <person name="Tschische P."/>
            <person name="Waldhoer M."/>
            <person name="Bomsel M."/>
            <person name="Jockers R."/>
            <person name="Kamal M."/>
        </authorList>
    </citation>
    <scope>INDUCTION (MICROBIAL INFECTION)</scope>
    <scope>INTERACTION WITH HHV-5 PROTEIN UL78</scope>
</reference>
<reference key="26">
    <citation type="journal article" date="2014" name="Traffic">
        <title>CNIH4 interacts with newly synthesized GPCR and controls their export from the endoplasmic reticulum.</title>
        <authorList>
            <person name="Sauvageau E."/>
            <person name="Rochdi M.D."/>
            <person name="Oueslati M."/>
            <person name="Hamdan F.F."/>
            <person name="Percherancier Y."/>
            <person name="Simpson J.C."/>
            <person name="Pepperkok R."/>
            <person name="Bouvier M."/>
        </authorList>
    </citation>
    <scope>INTERACTION WITH CNIH4</scope>
</reference>
<reference key="27">
    <citation type="journal article" date="2018" name="Acta Naturae">
        <title>Tag7-Mts1 Complex Induces Lymphocytes Migration via CCR5 and CXCR3 Receptors.</title>
        <authorList>
            <person name="Sharapova T.N."/>
            <person name="Romanova E.A."/>
            <person name="Sashchenko L.P."/>
            <person name="Yashin D.V."/>
        </authorList>
    </citation>
    <scope>FUNCTION</scope>
    <scope>INTERACTION WITH S100A4</scope>
</reference>
<reference key="28">
    <citation type="journal article" date="2002" name="Biophys. J.">
        <title>Structure modeling of the chemokine receptor CCR5: implications for ligand binding and selectivity.</title>
        <authorList>
            <person name="Paterlini M.G."/>
        </authorList>
    </citation>
    <scope>3D-STRUCTURE MODELING</scope>
</reference>
<reference key="29">
    <citation type="journal article" date="2003" name="J. Mol. Model.">
        <title>Structural and functional characterization of the human CCR5 receptor in complex with HIV gp120 envelope glycoprotein and CD4 receptor by molecular modeling studies.</title>
        <authorList>
            <person name="Liu S."/>
            <person name="Fan S."/>
            <person name="Sun Z."/>
        </authorList>
    </citation>
    <scope>3D-STRUCTURE MODELING</scope>
</reference>
<reference key="30">
    <citation type="journal article" date="2011" name="J. Mol. Biol.">
        <title>The conformation and orientation of a 27-residue CCR5 peptide in a ternary complex with HIV-1 gp120 and a CD4-mimic peptide.</title>
        <authorList>
            <person name="Schnur E."/>
            <person name="Noah E."/>
            <person name="Ayzenshtat I."/>
            <person name="Sargsyan H."/>
            <person name="Inui T."/>
            <person name="Ding F.X."/>
            <person name="Arshava B."/>
            <person name="Sagi Y."/>
            <person name="Kessler N."/>
            <person name="Levy R."/>
            <person name="Scherf T."/>
            <person name="Naider F."/>
            <person name="Anglister J."/>
        </authorList>
    </citation>
    <scope>STRUCTURE BY NMR OF 1-27 IN COMPLEX WITH HIV-1 GP120 AND CD4 MIMIC PEPTIDE</scope>
    <scope>FUNCTION (MICROBIAL INFECTION)</scope>
    <scope>SULFATION AT TYR-10 AND TYR-14</scope>
</reference>
<reference evidence="32" key="31">
    <citation type="journal article" date="2013" name="Science">
        <title>Structure of the CCR5 chemokine receptor-HIV entry inhibitor maraviroc complex.</title>
        <authorList>
            <person name="Tan Q."/>
            <person name="Zhu Y."/>
            <person name="Li J."/>
            <person name="Chen Z."/>
            <person name="Han G.W."/>
            <person name="Kufareva I."/>
            <person name="Li T."/>
            <person name="Ma L."/>
            <person name="Fenalti G."/>
            <person name="Li J."/>
            <person name="Zhang W."/>
            <person name="Xie X."/>
            <person name="Yang H."/>
            <person name="Jiang H."/>
            <person name="Cherezov V."/>
            <person name="Liu H."/>
            <person name="Stevens R.C."/>
            <person name="Zhao Q."/>
            <person name="Wu B."/>
        </authorList>
    </citation>
    <scope>X-RAY CRYSTALLOGRAPHY (2.71 ANGSTROMS) OF 2-223 AND 227-352 IN COMPLEX WITH DRUG</scope>
    <scope>DISULFIDE BONDS</scope>
</reference>
<reference key="32">
    <citation type="journal article" date="1997" name="Nat. Genet.">
        <title>The extent of genetic variation in the CCR5 gene.</title>
        <authorList>
            <person name="Ansari-Lari M.A."/>
            <person name="Liu X.-M."/>
            <person name="Metzker M.L."/>
            <person name="Rut A.R."/>
            <person name="Gibbs R.A."/>
        </authorList>
    </citation>
    <scope>VARIANTS GLN-55; LEU-215; GLN-223; VAL-335 AND PHE-339</scope>
</reference>
<reference key="33">
    <citation type="journal article" date="1997" name="Am. J. Hum. Genet.">
        <title>Novel alleles of the chemokine-receptor gene CCR5.</title>
        <authorList>
            <person name="Carrington M."/>
            <person name="Kissner T."/>
            <person name="Gerrard B."/>
            <person name="Ivanov S."/>
            <person name="O'Brien S.J."/>
            <person name="Dean M."/>
        </authorList>
    </citation>
    <scope>VARIANTS LEU-12; SER-20; SER-29; PHE-42; GLN-55; SER-60; VAL-73; GLN-223; LYS-228 DEL; VAL-301; VAL-335 AND PHE-339</scope>
    <scope>ASSOCIATION WITH SUSCEPTIBILITY TO HIV-1</scope>
</reference>
<reference key="34">
    <citation type="journal article" date="2001" name="Blood">
        <title>A homologous naturally occurring mutation in Duffy and CCR5 leading to reduced receptor expression.</title>
        <authorList>
            <person name="Tamasauskas D."/>
            <person name="Powell V."/>
            <person name="Saksela K."/>
            <person name="Yazdanbakhsh K."/>
        </authorList>
    </citation>
    <scope>CHARACTERIZATION OF VARIANT SER-60</scope>
</reference>
<reference key="35">
    <citation type="journal article" date="2006" name="Retrovirology">
        <title>Persistent resistance to HIV-1 infection in CD4 T cells from exposed uninfected Vietnamese individuals is mediated by entry and post-entry blocks.</title>
        <authorList>
            <person name="Saez-Cirion A."/>
            <person name="Versmisse P."/>
            <person name="Truong L.X."/>
            <person name="Chakrabarti L.A."/>
            <person name="Carpentier W."/>
            <person name="Barre-Sinoussi F."/>
            <person name="Scott-Algara D."/>
            <person name="Pancino G."/>
        </authorList>
    </citation>
    <scope>INVOLVEMENT IN RESISTANCE TO HIV-1 INFECTION</scope>
    <scope>VARIANT ARG-106</scope>
    <scope>CHARACTERIZATION OF VARIANTS ARG-106 AND ARG-178</scope>
</reference>
<reference key="36">
    <citation type="journal article" date="2008" name="N. Engl. J. Med.">
        <title>Shared and distinct genetic variants in type 1 diabetes and celiac disease.</title>
        <authorList>
            <person name="Smyth D.J."/>
            <person name="Plagnol V."/>
            <person name="Walker N.M."/>
            <person name="Cooper J.D."/>
            <person name="Downes K."/>
            <person name="Yang J.H.M."/>
            <person name="Howson J.M.M."/>
            <person name="Stevens H."/>
            <person name="McManus R."/>
            <person name="Wijmenga C."/>
            <person name="Heap G.A."/>
            <person name="Dubois P.C."/>
            <person name="Clayton D.G."/>
            <person name="Hunt K.A."/>
            <person name="van Heel D.A."/>
            <person name="Todd J.A."/>
        </authorList>
    </citation>
    <scope>INVOLVEMENT IN T1D22</scope>
</reference>
<keyword id="KW-0002">3D-structure</keyword>
<keyword id="KW-1003">Cell membrane</keyword>
<keyword id="KW-0219">Diabetes mellitus</keyword>
<keyword id="KW-1015">Disulfide bond</keyword>
<keyword id="KW-0297">G-protein coupled receptor</keyword>
<keyword id="KW-0325">Glycoprotein</keyword>
<keyword id="KW-1183">Host cell receptor for virus entry</keyword>
<keyword id="KW-0945">Host-virus interaction</keyword>
<keyword id="KW-0449">Lipoprotein</keyword>
<keyword id="KW-0472">Membrane</keyword>
<keyword id="KW-0564">Palmitate</keyword>
<keyword id="KW-0597">Phosphoprotein</keyword>
<keyword id="KW-1267">Proteomics identification</keyword>
<keyword id="KW-0675">Receptor</keyword>
<keyword id="KW-1185">Reference proteome</keyword>
<keyword id="KW-0765">Sulfation</keyword>
<keyword id="KW-0807">Transducer</keyword>
<keyword id="KW-0812">Transmembrane</keyword>
<keyword id="KW-1133">Transmembrane helix</keyword>
<protein>
    <recommendedName>
        <fullName evidence="30">C-C chemokine receptor type 5</fullName>
        <shortName>C-C CKR-5</shortName>
        <shortName>CC-CKR-5</shortName>
        <shortName>CCR-5</shortName>
        <shortName>CCR5</shortName>
    </recommendedName>
    <alternativeName>
        <fullName>CHEMR13</fullName>
    </alternativeName>
    <alternativeName>
        <fullName>HIV-1 fusion coreceptor</fullName>
    </alternativeName>
    <cdAntigenName>CD195</cdAntigenName>
</protein>
<sequence length="352" mass="40524">MDYQVSSPIYDINYYTSEPCQKINVKQIAARLLPPLYSLVFIFGFVGNMLVILILINCKRLKSMTDIYLLNLAISDLFFLLTVPFWAHYAAAQWDFGNTMCQLLTGLYFIGFFSGIFFIILLTIDRYLAVVHAVFALKARTVTFGVVTSVITWVVAVFASLPGIIFTRSQKEGLHYTCSSHFPYSQYQFWKNFQTLKIVILGLVLPLLVMVICYSGILKTLLRCRNEKKRHRAVRLIFTIMIVYFLFWAPYNIVLLLNTFQEFFGLNNCSSSNRLDQAMQVTETLGMTHCCINPIIYAFVGEKFRNYLLVFFQKHIAKRFCKCCSIFQQEAPERASSVYTRSTGEQEISVGL</sequence>
<organism>
    <name type="scientific">Homo sapiens</name>
    <name type="common">Human</name>
    <dbReference type="NCBI Taxonomy" id="9606"/>
    <lineage>
        <taxon>Eukaryota</taxon>
        <taxon>Metazoa</taxon>
        <taxon>Chordata</taxon>
        <taxon>Craniata</taxon>
        <taxon>Vertebrata</taxon>
        <taxon>Euteleostomi</taxon>
        <taxon>Mammalia</taxon>
        <taxon>Eutheria</taxon>
        <taxon>Euarchontoglires</taxon>
        <taxon>Primates</taxon>
        <taxon>Haplorrhini</taxon>
        <taxon>Catarrhini</taxon>
        <taxon>Hominidae</taxon>
        <taxon>Homo</taxon>
    </lineage>
</organism>
<dbReference type="EMBL" id="X91492">
    <property type="protein sequence ID" value="CAA62796.1"/>
    <property type="molecule type" value="Genomic_DNA"/>
</dbReference>
<dbReference type="EMBL" id="U54994">
    <property type="protein sequence ID" value="AAC50598.1"/>
    <property type="molecule type" value="mRNA"/>
</dbReference>
<dbReference type="EMBL" id="U57840">
    <property type="protein sequence ID" value="AAB17071.1"/>
    <property type="molecule type" value="mRNA"/>
</dbReference>
<dbReference type="EMBL" id="U83326">
    <property type="protein sequence ID" value="AAC51797.1"/>
    <property type="molecule type" value="Genomic_DNA"/>
</dbReference>
<dbReference type="EMBL" id="AF011500">
    <property type="protein sequence ID" value="AAB65700.1"/>
    <property type="molecule type" value="mRNA"/>
</dbReference>
<dbReference type="EMBL" id="AF011501">
    <property type="protein sequence ID" value="AAB65701.1"/>
    <property type="molecule type" value="mRNA"/>
</dbReference>
<dbReference type="EMBL" id="AF011502">
    <property type="protein sequence ID" value="AAB65702.1"/>
    <property type="molecule type" value="mRNA"/>
</dbReference>
<dbReference type="EMBL" id="AF011503">
    <property type="protein sequence ID" value="AAB65703.1"/>
    <property type="molecule type" value="mRNA"/>
</dbReference>
<dbReference type="EMBL" id="AF011505">
    <property type="protein sequence ID" value="AAB65705.1"/>
    <property type="molecule type" value="mRNA"/>
</dbReference>
<dbReference type="EMBL" id="AF011506">
    <property type="protein sequence ID" value="AAB65706.1"/>
    <property type="molecule type" value="mRNA"/>
</dbReference>
<dbReference type="EMBL" id="AF011507">
    <property type="protein sequence ID" value="AAB65707.1"/>
    <property type="molecule type" value="mRNA"/>
</dbReference>
<dbReference type="EMBL" id="AF011508">
    <property type="protein sequence ID" value="AAB65708.1"/>
    <property type="molecule type" value="mRNA"/>
</dbReference>
<dbReference type="EMBL" id="AF011509">
    <property type="protein sequence ID" value="AAB65709.1"/>
    <property type="molecule type" value="mRNA"/>
</dbReference>
<dbReference type="EMBL" id="AF011510">
    <property type="protein sequence ID" value="AAB65710.1"/>
    <property type="molecule type" value="mRNA"/>
</dbReference>
<dbReference type="EMBL" id="AF011511">
    <property type="protein sequence ID" value="AAB65711.1"/>
    <property type="molecule type" value="mRNA"/>
</dbReference>
<dbReference type="EMBL" id="AF011512">
    <property type="protein sequence ID" value="AAB65712.1"/>
    <property type="molecule type" value="mRNA"/>
</dbReference>
<dbReference type="EMBL" id="AF011513">
    <property type="protein sequence ID" value="AAB65713.1"/>
    <property type="molecule type" value="mRNA"/>
</dbReference>
<dbReference type="EMBL" id="AF011514">
    <property type="protein sequence ID" value="AAB65714.1"/>
    <property type="molecule type" value="mRNA"/>
</dbReference>
<dbReference type="EMBL" id="AF011515">
    <property type="protein sequence ID" value="AAB65715.1"/>
    <property type="molecule type" value="mRNA"/>
</dbReference>
<dbReference type="EMBL" id="AF011516">
    <property type="protein sequence ID" value="AAB65716.1"/>
    <property type="molecule type" value="mRNA"/>
</dbReference>
<dbReference type="EMBL" id="AF011517">
    <property type="protein sequence ID" value="AAB65717.1"/>
    <property type="molecule type" value="mRNA"/>
</dbReference>
<dbReference type="EMBL" id="AF011518">
    <property type="protein sequence ID" value="AAB65718.1"/>
    <property type="molecule type" value="mRNA"/>
</dbReference>
<dbReference type="EMBL" id="AF011519">
    <property type="protein sequence ID" value="AAB65719.1"/>
    <property type="molecule type" value="mRNA"/>
</dbReference>
<dbReference type="EMBL" id="AF011520">
    <property type="protein sequence ID" value="AAB65720.1"/>
    <property type="molecule type" value="mRNA"/>
</dbReference>
<dbReference type="EMBL" id="AF011521">
    <property type="protein sequence ID" value="AAB65721.1"/>
    <property type="molecule type" value="mRNA"/>
</dbReference>
<dbReference type="EMBL" id="AF011522">
    <property type="protein sequence ID" value="AAB65722.1"/>
    <property type="molecule type" value="mRNA"/>
</dbReference>
<dbReference type="EMBL" id="AF011523">
    <property type="protein sequence ID" value="AAB65723.1"/>
    <property type="molecule type" value="mRNA"/>
</dbReference>
<dbReference type="EMBL" id="AF011524">
    <property type="protein sequence ID" value="AAB65724.1"/>
    <property type="molecule type" value="mRNA"/>
</dbReference>
<dbReference type="EMBL" id="AF011525">
    <property type="protein sequence ID" value="AAB65725.1"/>
    <property type="molecule type" value="mRNA"/>
</dbReference>
<dbReference type="EMBL" id="AF011526">
    <property type="protein sequence ID" value="AAB65726.1"/>
    <property type="molecule type" value="mRNA"/>
</dbReference>
<dbReference type="EMBL" id="AF011527">
    <property type="protein sequence ID" value="AAB65727.1"/>
    <property type="molecule type" value="mRNA"/>
</dbReference>
<dbReference type="EMBL" id="AF011528">
    <property type="protein sequence ID" value="AAB65728.1"/>
    <property type="molecule type" value="mRNA"/>
</dbReference>
<dbReference type="EMBL" id="AF011529">
    <property type="protein sequence ID" value="AAB65729.1"/>
    <property type="molecule type" value="mRNA"/>
</dbReference>
<dbReference type="EMBL" id="AF011530">
    <property type="protein sequence ID" value="AAB65730.1"/>
    <property type="molecule type" value="mRNA"/>
</dbReference>
<dbReference type="EMBL" id="AF011531">
    <property type="protein sequence ID" value="AAB65731.1"/>
    <property type="molecule type" value="mRNA"/>
</dbReference>
<dbReference type="EMBL" id="AF011532">
    <property type="protein sequence ID" value="AAB65732.1"/>
    <property type="molecule type" value="mRNA"/>
</dbReference>
<dbReference type="EMBL" id="AF011533">
    <property type="protein sequence ID" value="AAB65733.1"/>
    <property type="molecule type" value="mRNA"/>
</dbReference>
<dbReference type="EMBL" id="AF011534">
    <property type="protein sequence ID" value="AAB65734.1"/>
    <property type="molecule type" value="mRNA"/>
</dbReference>
<dbReference type="EMBL" id="AF011535">
    <property type="protein sequence ID" value="AAB65735.1"/>
    <property type="molecule type" value="mRNA"/>
</dbReference>
<dbReference type="EMBL" id="AF011536">
    <property type="protein sequence ID" value="AAB65736.1"/>
    <property type="molecule type" value="mRNA"/>
</dbReference>
<dbReference type="EMBL" id="AF011537">
    <property type="protein sequence ID" value="AAB65737.1"/>
    <property type="molecule type" value="mRNA"/>
</dbReference>
<dbReference type="EMBL" id="AF031237">
    <property type="protein sequence ID" value="AAB94735.1"/>
    <property type="molecule type" value="Genomic_DNA"/>
</dbReference>
<dbReference type="EMBL" id="AF052539">
    <property type="protein sequence ID" value="AAD18131.1"/>
    <property type="molecule type" value="Genomic_DNA"/>
</dbReference>
<dbReference type="EMBL" id="AY221093">
    <property type="protein sequence ID" value="AAO65971.1"/>
    <property type="molecule type" value="Genomic_DNA"/>
</dbReference>
<dbReference type="EMBL" id="U95626">
    <property type="protein sequence ID" value="AAB57793.1"/>
    <property type="molecule type" value="Genomic_DNA"/>
</dbReference>
<dbReference type="EMBL" id="BC038398">
    <property type="protein sequence ID" value="AAH38398.1"/>
    <property type="molecule type" value="mRNA"/>
</dbReference>
<dbReference type="CCDS" id="CCDS2739.1"/>
<dbReference type="PIR" id="A43113">
    <property type="entry name" value="A43113"/>
</dbReference>
<dbReference type="RefSeq" id="NP_000570.1">
    <property type="nucleotide sequence ID" value="NM_000579.4"/>
</dbReference>
<dbReference type="RefSeq" id="NP_001093638.1">
    <property type="nucleotide sequence ID" value="NM_001100168.2"/>
</dbReference>
<dbReference type="RefSeq" id="NP_001381712.1">
    <property type="nucleotide sequence ID" value="NM_001394783.1"/>
</dbReference>
<dbReference type="PDB" id="2L87">
    <property type="method" value="NMR"/>
    <property type="chains" value="A=1-27"/>
</dbReference>
<dbReference type="PDB" id="2MZX">
    <property type="method" value="NMR"/>
    <property type="chains" value="A=186-195"/>
</dbReference>
<dbReference type="PDB" id="2RLL">
    <property type="method" value="NMR"/>
    <property type="chains" value="A=7-15"/>
</dbReference>
<dbReference type="PDB" id="2RRS">
    <property type="method" value="NMR"/>
    <property type="chains" value="A=157-174"/>
</dbReference>
<dbReference type="PDB" id="4MBS">
    <property type="method" value="X-ray"/>
    <property type="resolution" value="2.71 A"/>
    <property type="chains" value="A/B=2-352"/>
</dbReference>
<dbReference type="PDB" id="5UIW">
    <property type="method" value="X-ray"/>
    <property type="resolution" value="2.20 A"/>
    <property type="chains" value="A=2-352"/>
</dbReference>
<dbReference type="PDB" id="5YD3">
    <property type="method" value="X-ray"/>
    <property type="resolution" value="1.35 A"/>
    <property type="chains" value="B/D/F/H=11-19"/>
</dbReference>
<dbReference type="PDB" id="5YD4">
    <property type="method" value="X-ray"/>
    <property type="resolution" value="1.35 A"/>
    <property type="chains" value="B/D/F/H=11-19"/>
</dbReference>
<dbReference type="PDB" id="5YD5">
    <property type="method" value="X-ray"/>
    <property type="resolution" value="1.96 A"/>
    <property type="chains" value="B/D=11-19"/>
</dbReference>
<dbReference type="PDB" id="5YY4">
    <property type="method" value="X-ray"/>
    <property type="resolution" value="1.59 A"/>
    <property type="chains" value="B=11-19"/>
</dbReference>
<dbReference type="PDB" id="6FGP">
    <property type="method" value="NMR"/>
    <property type="chains" value="A=1-27"/>
</dbReference>
<dbReference type="PDB" id="6MEO">
    <property type="method" value="EM"/>
    <property type="resolution" value="3.90 A"/>
    <property type="chains" value="B=1-313"/>
</dbReference>
<dbReference type="PDB" id="6MET">
    <property type="method" value="EM"/>
    <property type="resolution" value="4.50 A"/>
    <property type="chains" value="B=1-313"/>
</dbReference>
<dbReference type="PDB" id="7F1Q">
    <property type="method" value="EM"/>
    <property type="resolution" value="2.90 A"/>
    <property type="chains" value="R=2-319"/>
</dbReference>
<dbReference type="PDB" id="7F1R">
    <property type="method" value="EM"/>
    <property type="resolution" value="3.00 A"/>
    <property type="chains" value="R=2-319"/>
</dbReference>
<dbReference type="PDB" id="7F1S">
    <property type="method" value="EM"/>
    <property type="resolution" value="2.80 A"/>
    <property type="chains" value="R=2-319"/>
</dbReference>
<dbReference type="PDB" id="7NJZ">
    <property type="method" value="X-ray"/>
    <property type="resolution" value="3.20 A"/>
    <property type="chains" value="C=8-13"/>
</dbReference>
<dbReference type="PDB" id="7NW3">
    <property type="method" value="X-ray"/>
    <property type="resolution" value="3.20 A"/>
    <property type="chains" value="A=8-13"/>
</dbReference>
<dbReference type="PDB" id="7O7F">
    <property type="method" value="EM"/>
    <property type="resolution" value="3.15 A"/>
    <property type="chains" value="C=1-352"/>
</dbReference>
<dbReference type="PDB" id="8AS2">
    <property type="method" value="X-ray"/>
    <property type="resolution" value="3.20 A"/>
    <property type="chains" value="B=331-352"/>
</dbReference>
<dbReference type="PDB" id="8AS3">
    <property type="method" value="X-ray"/>
    <property type="resolution" value="3.50 A"/>
    <property type="chains" value="B=331-351"/>
</dbReference>
<dbReference type="PDBsum" id="2L87"/>
<dbReference type="PDBsum" id="2MZX"/>
<dbReference type="PDBsum" id="2RLL"/>
<dbReference type="PDBsum" id="2RRS"/>
<dbReference type="PDBsum" id="4MBS"/>
<dbReference type="PDBsum" id="5UIW"/>
<dbReference type="PDBsum" id="5YD3"/>
<dbReference type="PDBsum" id="5YD4"/>
<dbReference type="PDBsum" id="5YD5"/>
<dbReference type="PDBsum" id="5YY4"/>
<dbReference type="PDBsum" id="6FGP"/>
<dbReference type="PDBsum" id="6MEO"/>
<dbReference type="PDBsum" id="6MET"/>
<dbReference type="PDBsum" id="7F1Q"/>
<dbReference type="PDBsum" id="7F1R"/>
<dbReference type="PDBsum" id="7F1S"/>
<dbReference type="PDBsum" id="7NJZ"/>
<dbReference type="PDBsum" id="7NW3"/>
<dbReference type="PDBsum" id="7O7F"/>
<dbReference type="PDBsum" id="8AS2"/>
<dbReference type="PDBsum" id="8AS3"/>
<dbReference type="BMRB" id="P51681"/>
<dbReference type="EMDB" id="EMD-12746"/>
<dbReference type="EMDB" id="EMD-31422"/>
<dbReference type="EMDB" id="EMD-31423"/>
<dbReference type="EMDB" id="EMD-31424"/>
<dbReference type="EMDB" id="EMD-9108"/>
<dbReference type="EMDB" id="EMD-9109"/>
<dbReference type="SMR" id="P51681"/>
<dbReference type="BioGRID" id="107639">
    <property type="interactions" value="21"/>
</dbReference>
<dbReference type="CORUM" id="P51681"/>
<dbReference type="DIP" id="DIP-5866N"/>
<dbReference type="FunCoup" id="P51681">
    <property type="interactions" value="1065"/>
</dbReference>
<dbReference type="IntAct" id="P51681">
    <property type="interactions" value="17"/>
</dbReference>
<dbReference type="MINT" id="P51681"/>
<dbReference type="STRING" id="9606.ENSP00000292303"/>
<dbReference type="BindingDB" id="P51681"/>
<dbReference type="ChEMBL" id="CHEMBL274"/>
<dbReference type="DrugBank" id="DB06497">
    <property type="generic name" value="Aplaviroc"/>
</dbReference>
<dbReference type="DrugBank" id="DB16240">
    <property type="generic name" value="BMS-813160"/>
</dbReference>
<dbReference type="DrugBank" id="DB05906">
    <property type="generic name" value="CCR5 mAb"/>
</dbReference>
<dbReference type="DrugBank" id="DB11758">
    <property type="generic name" value="Cenicriviroc"/>
</dbReference>
<dbReference type="DrugBank" id="DB12698">
    <property type="generic name" value="Ibalizumab"/>
</dbReference>
<dbReference type="DrugBank" id="DB12960">
    <property type="generic name" value="INCB-9471"/>
</dbReference>
<dbReference type="DrugBank" id="DB05941">
    <property type="generic name" value="Leronlimab"/>
</dbReference>
<dbReference type="DrugBank" id="DB04835">
    <property type="generic name" value="Maraviroc"/>
</dbReference>
<dbReference type="DrugBank" id="DB14813">
    <property type="generic name" value="PF-232798"/>
</dbReference>
<dbReference type="DrugBank" id="DB06652">
    <property type="generic name" value="Vicriviroc"/>
</dbReference>
<dbReference type="DrugCentral" id="P51681"/>
<dbReference type="GuidetoPHARMACOLOGY" id="62"/>
<dbReference type="GlyCosmos" id="P51681">
    <property type="glycosylation" value="2 sites, No reported glycans"/>
</dbReference>
<dbReference type="GlyGen" id="P51681">
    <property type="glycosylation" value="2 sites"/>
</dbReference>
<dbReference type="iPTMnet" id="P51681"/>
<dbReference type="PhosphoSitePlus" id="P51681"/>
<dbReference type="SwissPalm" id="P51681"/>
<dbReference type="BioMuta" id="CCR5"/>
<dbReference type="DMDM" id="1705896"/>
<dbReference type="MassIVE" id="P51681"/>
<dbReference type="PaxDb" id="9606-ENSP00000292303"/>
<dbReference type="PeptideAtlas" id="P51681"/>
<dbReference type="ProteomicsDB" id="56367"/>
<dbReference type="ABCD" id="P51681">
    <property type="antibodies" value="38 sequenced antibodies"/>
</dbReference>
<dbReference type="Antibodypedia" id="29674">
    <property type="antibodies" value="1911 antibodies from 49 providers"/>
</dbReference>
<dbReference type="DNASU" id="1234"/>
<dbReference type="Ensembl" id="ENST00000292303.5">
    <property type="protein sequence ID" value="ENSP00000292303.4"/>
    <property type="gene ID" value="ENSG00000160791.14"/>
</dbReference>
<dbReference type="Ensembl" id="ENST00000445772.1">
    <property type="protein sequence ID" value="ENSP00000404881.1"/>
    <property type="gene ID" value="ENSG00000160791.14"/>
</dbReference>
<dbReference type="GeneID" id="1234"/>
<dbReference type="KEGG" id="hsa:1234"/>
<dbReference type="MANE-Select" id="ENST00000292303.5">
    <property type="protein sequence ID" value="ENSP00000292303.4"/>
    <property type="RefSeq nucleotide sequence ID" value="NM_001394783.1"/>
    <property type="RefSeq protein sequence ID" value="NP_001381712.1"/>
</dbReference>
<dbReference type="AGR" id="HGNC:1606"/>
<dbReference type="CTD" id="1234"/>
<dbReference type="DisGeNET" id="1234"/>
<dbReference type="GeneCards" id="CCR5"/>
<dbReference type="HGNC" id="HGNC:1606">
    <property type="gene designation" value="CCR5"/>
</dbReference>
<dbReference type="HPA" id="ENSG00000160791">
    <property type="expression patterns" value="Tissue enhanced (lymphoid)"/>
</dbReference>
<dbReference type="MalaCards" id="CCR5"/>
<dbReference type="MIM" id="601373">
    <property type="type" value="gene"/>
</dbReference>
<dbReference type="MIM" id="609423">
    <property type="type" value="phenotype"/>
</dbReference>
<dbReference type="MIM" id="610379">
    <property type="type" value="phenotype"/>
</dbReference>
<dbReference type="MIM" id="612522">
    <property type="type" value="phenotype"/>
</dbReference>
<dbReference type="neXtProt" id="NX_P51681"/>
<dbReference type="OpenTargets" id="ENSG00000160791"/>
<dbReference type="PharmGKB" id="PA26170"/>
<dbReference type="VEuPathDB" id="HostDB:ENSG00000160791"/>
<dbReference type="eggNOG" id="KOG3656">
    <property type="taxonomic scope" value="Eukaryota"/>
</dbReference>
<dbReference type="GeneTree" id="ENSGT01020000230359"/>
<dbReference type="HOGENOM" id="CLU_009579_8_3_1"/>
<dbReference type="InParanoid" id="P51681"/>
<dbReference type="OMA" id="HYTCSPH"/>
<dbReference type="OrthoDB" id="9876908at2759"/>
<dbReference type="PAN-GO" id="P51681">
    <property type="GO annotations" value="9 GO annotations based on evolutionary models"/>
</dbReference>
<dbReference type="PhylomeDB" id="P51681"/>
<dbReference type="TreeFam" id="TF330966"/>
<dbReference type="PathwayCommons" id="P51681"/>
<dbReference type="Reactome" id="R-HSA-173107">
    <property type="pathway name" value="Binding and entry of HIV virion"/>
</dbReference>
<dbReference type="Reactome" id="R-HSA-380108">
    <property type="pathway name" value="Chemokine receptors bind chemokines"/>
</dbReference>
<dbReference type="Reactome" id="R-HSA-418594">
    <property type="pathway name" value="G alpha (i) signalling events"/>
</dbReference>
<dbReference type="Reactome" id="R-HSA-6783783">
    <property type="pathway name" value="Interleukin-10 signaling"/>
</dbReference>
<dbReference type="SignaLink" id="P51681"/>
<dbReference type="SIGNOR" id="P51681"/>
<dbReference type="BioGRID-ORCS" id="1234">
    <property type="hits" value="15 hits in 1153 CRISPR screens"/>
</dbReference>
<dbReference type="EvolutionaryTrace" id="P51681"/>
<dbReference type="GeneWiki" id="CCR5"/>
<dbReference type="GenomeRNAi" id="1234"/>
<dbReference type="Pharos" id="P51681">
    <property type="development level" value="Tclin"/>
</dbReference>
<dbReference type="PRO" id="PR:P51681"/>
<dbReference type="Proteomes" id="UP000005640">
    <property type="component" value="Chromosome 3"/>
</dbReference>
<dbReference type="RNAct" id="P51681">
    <property type="molecule type" value="protein"/>
</dbReference>
<dbReference type="Bgee" id="ENSG00000160791">
    <property type="expression patterns" value="Expressed in epithelium of nasopharynx and 137 other cell types or tissues"/>
</dbReference>
<dbReference type="ExpressionAtlas" id="P51681">
    <property type="expression patterns" value="baseline and differential"/>
</dbReference>
<dbReference type="GO" id="GO:0009986">
    <property type="term" value="C:cell surface"/>
    <property type="evidence" value="ECO:0000314"/>
    <property type="project" value="UniProtKB"/>
</dbReference>
<dbReference type="GO" id="GO:0005737">
    <property type="term" value="C:cytoplasm"/>
    <property type="evidence" value="ECO:0000318"/>
    <property type="project" value="GO_Central"/>
</dbReference>
<dbReference type="GO" id="GO:0005768">
    <property type="term" value="C:endosome"/>
    <property type="evidence" value="ECO:0000314"/>
    <property type="project" value="UniProtKB"/>
</dbReference>
<dbReference type="GO" id="GO:0009897">
    <property type="term" value="C:external side of plasma membrane"/>
    <property type="evidence" value="ECO:0000314"/>
    <property type="project" value="UniProtKB"/>
</dbReference>
<dbReference type="GO" id="GO:0005886">
    <property type="term" value="C:plasma membrane"/>
    <property type="evidence" value="ECO:0000304"/>
    <property type="project" value="Reactome"/>
</dbReference>
<dbReference type="GO" id="GO:0003779">
    <property type="term" value="F:actin binding"/>
    <property type="evidence" value="ECO:0000314"/>
    <property type="project" value="UniProtKB"/>
</dbReference>
<dbReference type="GO" id="GO:0019957">
    <property type="term" value="F:C-C chemokine binding"/>
    <property type="evidence" value="ECO:0000353"/>
    <property type="project" value="UniProtKB"/>
</dbReference>
<dbReference type="GO" id="GO:0016493">
    <property type="term" value="F:C-C chemokine receptor activity"/>
    <property type="evidence" value="ECO:0000314"/>
    <property type="project" value="UniProtKB"/>
</dbReference>
<dbReference type="GO" id="GO:0071791">
    <property type="term" value="F:chemokine (C-C motif) ligand 5 binding"/>
    <property type="evidence" value="ECO:0000353"/>
    <property type="project" value="UniProtKB"/>
</dbReference>
<dbReference type="GO" id="GO:0004950">
    <property type="term" value="F:chemokine receptor activity"/>
    <property type="evidence" value="ECO:0000304"/>
    <property type="project" value="ProtInc"/>
</dbReference>
<dbReference type="GO" id="GO:0015026">
    <property type="term" value="F:coreceptor activity"/>
    <property type="evidence" value="ECO:0000304"/>
    <property type="project" value="ProtInc"/>
</dbReference>
<dbReference type="GO" id="GO:0042802">
    <property type="term" value="F:identical protein binding"/>
    <property type="evidence" value="ECO:0000353"/>
    <property type="project" value="IntAct"/>
</dbReference>
<dbReference type="GO" id="GO:0004435">
    <property type="term" value="F:phosphatidylinositol-4,5-bisphosphate phospholipase C activity"/>
    <property type="evidence" value="ECO:0000304"/>
    <property type="project" value="ProtInc"/>
</dbReference>
<dbReference type="GO" id="GO:0001618">
    <property type="term" value="F:virus receptor activity"/>
    <property type="evidence" value="ECO:0000304"/>
    <property type="project" value="ProtInc"/>
</dbReference>
<dbReference type="GO" id="GO:0006915">
    <property type="term" value="P:apoptotic process"/>
    <property type="evidence" value="ECO:0007669"/>
    <property type="project" value="Ensembl"/>
</dbReference>
<dbReference type="GO" id="GO:0006816">
    <property type="term" value="P:calcium ion transport"/>
    <property type="evidence" value="ECO:0000314"/>
    <property type="project" value="UniProtKB"/>
</dbReference>
<dbReference type="GO" id="GO:0019722">
    <property type="term" value="P:calcium-mediated signaling"/>
    <property type="evidence" value="ECO:0000314"/>
    <property type="project" value="UniProtKB"/>
</dbReference>
<dbReference type="GO" id="GO:0060326">
    <property type="term" value="P:cell chemotaxis"/>
    <property type="evidence" value="ECO:0000318"/>
    <property type="project" value="GO_Central"/>
</dbReference>
<dbReference type="GO" id="GO:0007166">
    <property type="term" value="P:cell surface receptor signaling pathway"/>
    <property type="evidence" value="ECO:0000304"/>
    <property type="project" value="ProtInc"/>
</dbReference>
<dbReference type="GO" id="GO:0007267">
    <property type="term" value="P:cell-cell signaling"/>
    <property type="evidence" value="ECO:0000314"/>
    <property type="project" value="UniProtKB"/>
</dbReference>
<dbReference type="GO" id="GO:0006968">
    <property type="term" value="P:cellular defense response"/>
    <property type="evidence" value="ECO:0000304"/>
    <property type="project" value="ProtInc"/>
</dbReference>
<dbReference type="GO" id="GO:0071222">
    <property type="term" value="P:cellular response to lipopolysaccharide"/>
    <property type="evidence" value="ECO:0000270"/>
    <property type="project" value="UniProtKB"/>
</dbReference>
<dbReference type="GO" id="GO:0006935">
    <property type="term" value="P:chemotaxis"/>
    <property type="evidence" value="ECO:0000304"/>
    <property type="project" value="ProtInc"/>
</dbReference>
<dbReference type="GO" id="GO:0002407">
    <property type="term" value="P:dendritic cell chemotaxis"/>
    <property type="evidence" value="ECO:0000304"/>
    <property type="project" value="BHF-UCL"/>
</dbReference>
<dbReference type="GO" id="GO:0007186">
    <property type="term" value="P:G protein-coupled receptor signaling pathway"/>
    <property type="evidence" value="ECO:0000315"/>
    <property type="project" value="UniProtKB"/>
</dbReference>
<dbReference type="GO" id="GO:0006955">
    <property type="term" value="P:immune response"/>
    <property type="evidence" value="ECO:0000318"/>
    <property type="project" value="GO_Central"/>
</dbReference>
<dbReference type="GO" id="GO:0006954">
    <property type="term" value="P:inflammatory response"/>
    <property type="evidence" value="ECO:0000318"/>
    <property type="project" value="GO_Central"/>
</dbReference>
<dbReference type="GO" id="GO:0000165">
    <property type="term" value="P:MAPK cascade"/>
    <property type="evidence" value="ECO:0000270"/>
    <property type="project" value="UniProtKB"/>
</dbReference>
<dbReference type="GO" id="GO:2000110">
    <property type="term" value="P:negative regulation of macrophage apoptotic process"/>
    <property type="evidence" value="ECO:0007669"/>
    <property type="project" value="Ensembl"/>
</dbReference>
<dbReference type="GO" id="GO:0007204">
    <property type="term" value="P:positive regulation of cytosolic calcium ion concentration"/>
    <property type="evidence" value="ECO:0000318"/>
    <property type="project" value="GO_Central"/>
</dbReference>
<dbReference type="GO" id="GO:0014808">
    <property type="term" value="P:release of sequestered calcium ion into cytosol by sarcoplasmic reticulum"/>
    <property type="evidence" value="ECO:0000314"/>
    <property type="project" value="UniProtKB"/>
</dbReference>
<dbReference type="GO" id="GO:0070723">
    <property type="term" value="P:response to cholesterol"/>
    <property type="evidence" value="ECO:0000315"/>
    <property type="project" value="UniProtKB"/>
</dbReference>
<dbReference type="GO" id="GO:0023052">
    <property type="term" value="P:signaling"/>
    <property type="evidence" value="ECO:0000270"/>
    <property type="project" value="UniProtKB"/>
</dbReference>
<dbReference type="CDD" id="cd15184">
    <property type="entry name" value="7tmA_CCR5_CCR2"/>
    <property type="match status" value="1"/>
</dbReference>
<dbReference type="FunFam" id="1.20.1070.10:FF:000026">
    <property type="entry name" value="C-C chemokine receptor type 5"/>
    <property type="match status" value="1"/>
</dbReference>
<dbReference type="Gene3D" id="1.20.1070.10">
    <property type="entry name" value="Rhodopsin 7-helix transmembrane proteins"/>
    <property type="match status" value="1"/>
</dbReference>
<dbReference type="InterPro" id="IPR050119">
    <property type="entry name" value="CCR1-9-like"/>
</dbReference>
<dbReference type="InterPro" id="IPR002240">
    <property type="entry name" value="Chemokine_CCR5"/>
</dbReference>
<dbReference type="InterPro" id="IPR000355">
    <property type="entry name" value="Chemokine_rcpt"/>
</dbReference>
<dbReference type="InterPro" id="IPR000276">
    <property type="entry name" value="GPCR_Rhodpsn"/>
</dbReference>
<dbReference type="InterPro" id="IPR017452">
    <property type="entry name" value="GPCR_Rhodpsn_7TM"/>
</dbReference>
<dbReference type="PANTHER" id="PTHR10489:SF686">
    <property type="entry name" value="C-C CHEMOKINE RECEPTOR TYPE 5"/>
    <property type="match status" value="1"/>
</dbReference>
<dbReference type="PANTHER" id="PTHR10489">
    <property type="entry name" value="CELL ADHESION MOLECULE"/>
    <property type="match status" value="1"/>
</dbReference>
<dbReference type="Pfam" id="PF00001">
    <property type="entry name" value="7tm_1"/>
    <property type="match status" value="1"/>
</dbReference>
<dbReference type="PRINTS" id="PR00657">
    <property type="entry name" value="CCCHEMOKINER"/>
</dbReference>
<dbReference type="PRINTS" id="PR01110">
    <property type="entry name" value="CHEMOKINER5"/>
</dbReference>
<dbReference type="PRINTS" id="PR00237">
    <property type="entry name" value="GPCRRHODOPSN"/>
</dbReference>
<dbReference type="SUPFAM" id="SSF81321">
    <property type="entry name" value="Family A G protein-coupled receptor-like"/>
    <property type="match status" value="1"/>
</dbReference>
<dbReference type="PROSITE" id="PS00237">
    <property type="entry name" value="G_PROTEIN_RECEP_F1_1"/>
    <property type="match status" value="1"/>
</dbReference>
<dbReference type="PROSITE" id="PS50262">
    <property type="entry name" value="G_PROTEIN_RECEP_F1_2"/>
    <property type="match status" value="1"/>
</dbReference>
<accession>P51681</accession>
<accession>O14692</accession>
<accession>O14693</accession>
<accession>O14695</accession>
<accession>O14696</accession>
<accession>O14697</accession>
<accession>O14698</accession>
<accession>O14699</accession>
<accession>O14700</accession>
<accession>O14701</accession>
<accession>O14702</accession>
<accession>O14703</accession>
<accession>O14704</accession>
<accession>O14705</accession>
<accession>O14706</accession>
<accession>O14707</accession>
<accession>O14708</accession>
<accession>O15538</accession>
<accession>Q9UPA4</accession>